<comment type="function">
    <text evidence="1">Provides the (R)-glutamate required for cell wall biosynthesis.</text>
</comment>
<comment type="catalytic activity">
    <reaction evidence="1">
        <text>L-glutamate = D-glutamate</text>
        <dbReference type="Rhea" id="RHEA:12813"/>
        <dbReference type="ChEBI" id="CHEBI:29985"/>
        <dbReference type="ChEBI" id="CHEBI:29986"/>
        <dbReference type="EC" id="5.1.1.3"/>
    </reaction>
</comment>
<comment type="pathway">
    <text evidence="1">Cell wall biogenesis; peptidoglycan biosynthesis.</text>
</comment>
<comment type="similarity">
    <text evidence="1">Belongs to the aspartate/glutamate racemases family.</text>
</comment>
<dbReference type="EC" id="5.1.1.3" evidence="1"/>
<dbReference type="EMBL" id="CP000377">
    <property type="protein sequence ID" value="ABF63855.1"/>
    <property type="molecule type" value="Genomic_DNA"/>
</dbReference>
<dbReference type="RefSeq" id="WP_011538462.1">
    <property type="nucleotide sequence ID" value="NC_008044.1"/>
</dbReference>
<dbReference type="SMR" id="Q1GHL1"/>
<dbReference type="STRING" id="292414.TM1040_1122"/>
<dbReference type="KEGG" id="sit:TM1040_1122"/>
<dbReference type="eggNOG" id="COG0796">
    <property type="taxonomic scope" value="Bacteria"/>
</dbReference>
<dbReference type="HOGENOM" id="CLU_052344_0_3_5"/>
<dbReference type="OrthoDB" id="9801055at2"/>
<dbReference type="UniPathway" id="UPA00219"/>
<dbReference type="Proteomes" id="UP000000636">
    <property type="component" value="Chromosome"/>
</dbReference>
<dbReference type="GO" id="GO:0008881">
    <property type="term" value="F:glutamate racemase activity"/>
    <property type="evidence" value="ECO:0007669"/>
    <property type="project" value="UniProtKB-UniRule"/>
</dbReference>
<dbReference type="GO" id="GO:0071555">
    <property type="term" value="P:cell wall organization"/>
    <property type="evidence" value="ECO:0007669"/>
    <property type="project" value="UniProtKB-KW"/>
</dbReference>
<dbReference type="GO" id="GO:0009252">
    <property type="term" value="P:peptidoglycan biosynthetic process"/>
    <property type="evidence" value="ECO:0007669"/>
    <property type="project" value="UniProtKB-UniRule"/>
</dbReference>
<dbReference type="GO" id="GO:0008360">
    <property type="term" value="P:regulation of cell shape"/>
    <property type="evidence" value="ECO:0007669"/>
    <property type="project" value="UniProtKB-KW"/>
</dbReference>
<dbReference type="Gene3D" id="3.40.50.1860">
    <property type="match status" value="2"/>
</dbReference>
<dbReference type="HAMAP" id="MF_00258">
    <property type="entry name" value="Glu_racemase"/>
    <property type="match status" value="1"/>
</dbReference>
<dbReference type="InterPro" id="IPR015942">
    <property type="entry name" value="Asp/Glu/hydantoin_racemase"/>
</dbReference>
<dbReference type="InterPro" id="IPR001920">
    <property type="entry name" value="Asp/Glu_race"/>
</dbReference>
<dbReference type="InterPro" id="IPR018187">
    <property type="entry name" value="Asp/Glu_racemase_AS_1"/>
</dbReference>
<dbReference type="InterPro" id="IPR004391">
    <property type="entry name" value="Glu_race"/>
</dbReference>
<dbReference type="PANTHER" id="PTHR21198">
    <property type="entry name" value="GLUTAMATE RACEMASE"/>
    <property type="match status" value="1"/>
</dbReference>
<dbReference type="PANTHER" id="PTHR21198:SF2">
    <property type="entry name" value="GLUTAMATE RACEMASE"/>
    <property type="match status" value="1"/>
</dbReference>
<dbReference type="Pfam" id="PF01177">
    <property type="entry name" value="Asp_Glu_race"/>
    <property type="match status" value="1"/>
</dbReference>
<dbReference type="SUPFAM" id="SSF53681">
    <property type="entry name" value="Aspartate/glutamate racemase"/>
    <property type="match status" value="2"/>
</dbReference>
<dbReference type="PROSITE" id="PS00923">
    <property type="entry name" value="ASP_GLU_RACEMASE_1"/>
    <property type="match status" value="1"/>
</dbReference>
<feature type="chain" id="PRO_1000078575" description="Glutamate racemase">
    <location>
        <begin position="1"/>
        <end position="269"/>
    </location>
</feature>
<feature type="active site" description="Proton donor/acceptor" evidence="1">
    <location>
        <position position="70"/>
    </location>
</feature>
<feature type="active site" description="Proton donor/acceptor" evidence="1">
    <location>
        <position position="194"/>
    </location>
</feature>
<feature type="binding site" evidence="1">
    <location>
        <begin position="7"/>
        <end position="8"/>
    </location>
    <ligand>
        <name>substrate</name>
    </ligand>
</feature>
<feature type="binding site" evidence="1">
    <location>
        <begin position="39"/>
        <end position="40"/>
    </location>
    <ligand>
        <name>substrate</name>
    </ligand>
</feature>
<feature type="binding site" evidence="1">
    <location>
        <begin position="71"/>
        <end position="72"/>
    </location>
    <ligand>
        <name>substrate</name>
    </ligand>
</feature>
<feature type="binding site" evidence="1">
    <location>
        <begin position="195"/>
        <end position="196"/>
    </location>
    <ligand>
        <name>substrate</name>
    </ligand>
</feature>
<evidence type="ECO:0000255" key="1">
    <source>
        <dbReference type="HAMAP-Rule" id="MF_00258"/>
    </source>
</evidence>
<name>MURI_RUEST</name>
<reference key="1">
    <citation type="submission" date="2006-05" db="EMBL/GenBank/DDBJ databases">
        <title>Complete sequence of chromosome of Silicibacter sp. TM1040.</title>
        <authorList>
            <consortium name="US DOE Joint Genome Institute"/>
            <person name="Copeland A."/>
            <person name="Lucas S."/>
            <person name="Lapidus A."/>
            <person name="Barry K."/>
            <person name="Detter J.C."/>
            <person name="Glavina del Rio T."/>
            <person name="Hammon N."/>
            <person name="Israni S."/>
            <person name="Dalin E."/>
            <person name="Tice H."/>
            <person name="Pitluck S."/>
            <person name="Brettin T."/>
            <person name="Bruce D."/>
            <person name="Han C."/>
            <person name="Tapia R."/>
            <person name="Goodwin L."/>
            <person name="Thompson L.S."/>
            <person name="Gilna P."/>
            <person name="Schmutz J."/>
            <person name="Larimer F."/>
            <person name="Land M."/>
            <person name="Hauser L."/>
            <person name="Kyrpides N."/>
            <person name="Kim E."/>
            <person name="Belas R."/>
            <person name="Moran M.A."/>
            <person name="Buchan A."/>
            <person name="Gonzalez J.M."/>
            <person name="Schell M.A."/>
            <person name="Sun F."/>
            <person name="Richardson P."/>
        </authorList>
    </citation>
    <scope>NUCLEOTIDE SEQUENCE [LARGE SCALE GENOMIC DNA]</scope>
    <source>
        <strain>TM1040</strain>
    </source>
</reference>
<keyword id="KW-0133">Cell shape</keyword>
<keyword id="KW-0961">Cell wall biogenesis/degradation</keyword>
<keyword id="KW-0413">Isomerase</keyword>
<keyword id="KW-0573">Peptidoglycan synthesis</keyword>
<keyword id="KW-1185">Reference proteome</keyword>
<gene>
    <name evidence="1" type="primary">murI</name>
    <name type="ordered locus">TM1040_1122</name>
</gene>
<protein>
    <recommendedName>
        <fullName evidence="1">Glutamate racemase</fullName>
        <ecNumber evidence="1">5.1.1.3</ecNumber>
    </recommendedName>
</protein>
<accession>Q1GHL1</accession>
<proteinExistence type="inferred from homology"/>
<organism>
    <name type="scientific">Ruegeria sp. (strain TM1040)</name>
    <name type="common">Silicibacter sp.</name>
    <dbReference type="NCBI Taxonomy" id="292414"/>
    <lineage>
        <taxon>Bacteria</taxon>
        <taxon>Pseudomonadati</taxon>
        <taxon>Pseudomonadota</taxon>
        <taxon>Alphaproteobacteria</taxon>
        <taxon>Rhodobacterales</taxon>
        <taxon>Roseobacteraceae</taxon>
        <taxon>Ruegeria</taxon>
    </lineage>
</organism>
<sequence length="269" mass="29177">MAVGIFDSGLGGLTVLDAAQKRLPDVDFLYYGDNSHAPYGVRDAEDIYELTHKAVHDMWDRGCNLVILACNTASAAALRRMQEAGVPEGKRVLGVFVPLIEALTERQWGDNSPPREVAVKHVALFATPATVASRAFQRELAFRAIGVDVEAQACGGVVDAIEEGDMILAEALVKSHVDALLRKMPRPEAAILGCTHYPLMEDVFQKALGPDVQVFSQGRLVADSLAHYLERRPEMIGGGNAGYVTTGNANRVSSRATQFLRREITFEAA</sequence>